<name>IOVO_CATWA</name>
<proteinExistence type="evidence at protein level"/>
<evidence type="ECO:0000255" key="1">
    <source>
        <dbReference type="PROSITE-ProRule" id="PRU00798"/>
    </source>
</evidence>
<accession>P67957</accession>
<accession>P05586</accession>
<feature type="chain" id="PRO_0000073077" description="Ovomucoid">
    <location>
        <begin position="1" status="less than"/>
        <end position="56" status="greater than"/>
    </location>
</feature>
<feature type="domain" description="Kazal-like" evidence="1">
    <location>
        <begin position="6"/>
        <end position="56"/>
    </location>
</feature>
<feature type="site" description="Reactive bond 3">
    <location>
        <begin position="18"/>
        <end position="19"/>
    </location>
</feature>
<feature type="glycosylation site" description="N-linked (GlcNAc...) asparagine">
    <location>
        <position position="45"/>
    </location>
</feature>
<feature type="disulfide bond">
    <location>
        <begin position="8"/>
        <end position="38"/>
    </location>
</feature>
<feature type="disulfide bond">
    <location>
        <begin position="16"/>
        <end position="35"/>
    </location>
</feature>
<feature type="disulfide bond">
    <location>
        <begin position="24"/>
        <end position="56"/>
    </location>
</feature>
<feature type="non-terminal residue">
    <location>
        <position position="1"/>
    </location>
</feature>
<feature type="non-terminal residue">
    <location>
        <position position="56"/>
    </location>
</feature>
<dbReference type="SMR" id="P67957"/>
<dbReference type="GO" id="GO:0005615">
    <property type="term" value="C:extracellular space"/>
    <property type="evidence" value="ECO:0007669"/>
    <property type="project" value="UniProtKB-ARBA"/>
</dbReference>
<dbReference type="GO" id="GO:0004867">
    <property type="term" value="F:serine-type endopeptidase inhibitor activity"/>
    <property type="evidence" value="ECO:0007669"/>
    <property type="project" value="UniProtKB-KW"/>
</dbReference>
<dbReference type="CDD" id="cd00104">
    <property type="entry name" value="KAZAL_FS"/>
    <property type="match status" value="1"/>
</dbReference>
<dbReference type="FunFam" id="3.30.60.30:FF:000037">
    <property type="entry name" value="Ovomucoid"/>
    <property type="match status" value="1"/>
</dbReference>
<dbReference type="Gene3D" id="3.30.60.30">
    <property type="match status" value="1"/>
</dbReference>
<dbReference type="InterPro" id="IPR051597">
    <property type="entry name" value="Bifunctional_prot_inhibitor"/>
</dbReference>
<dbReference type="InterPro" id="IPR002350">
    <property type="entry name" value="Kazal_dom"/>
</dbReference>
<dbReference type="InterPro" id="IPR036058">
    <property type="entry name" value="Kazal_dom_sf"/>
</dbReference>
<dbReference type="InterPro" id="IPR001239">
    <property type="entry name" value="Prot_inh_Kazal-m"/>
</dbReference>
<dbReference type="PANTHER" id="PTHR47729:SF1">
    <property type="entry name" value="OVOMUCOID-LIKE-RELATED"/>
    <property type="match status" value="1"/>
</dbReference>
<dbReference type="PANTHER" id="PTHR47729">
    <property type="entry name" value="SERINE PEPTIDASE INHIBITOR, KAZAL TYPE 2, TANDEM DUPLICATE 1-RELATED"/>
    <property type="match status" value="1"/>
</dbReference>
<dbReference type="Pfam" id="PF00050">
    <property type="entry name" value="Kazal_1"/>
    <property type="match status" value="1"/>
</dbReference>
<dbReference type="PRINTS" id="PR00290">
    <property type="entry name" value="KAZALINHBTR"/>
</dbReference>
<dbReference type="SMART" id="SM00280">
    <property type="entry name" value="KAZAL"/>
    <property type="match status" value="1"/>
</dbReference>
<dbReference type="SUPFAM" id="SSF100895">
    <property type="entry name" value="Kazal-type serine protease inhibitors"/>
    <property type="match status" value="1"/>
</dbReference>
<dbReference type="PROSITE" id="PS00282">
    <property type="entry name" value="KAZAL_1"/>
    <property type="match status" value="1"/>
</dbReference>
<dbReference type="PROSITE" id="PS51465">
    <property type="entry name" value="KAZAL_2"/>
    <property type="match status" value="1"/>
</dbReference>
<sequence>LAAVSVDCSEYPKPACTMEYRPLCGSDNKTYGNKCNFCNAVVESNGTLTLSHFGKC</sequence>
<reference key="1">
    <citation type="journal article" date="1987" name="Biochemistry">
        <title>Ovomucoid third domains from 100 avian species: isolation, sequences, and hypervariability of enzyme-inhibitor contact residues.</title>
        <authorList>
            <person name="Laskowski M. Jr."/>
            <person name="Kato I."/>
            <person name="Ardelt W."/>
            <person name="Cook J."/>
            <person name="Denton A."/>
            <person name="Empie M.W."/>
            <person name="Kohr W.J."/>
            <person name="Park S.J."/>
            <person name="Parks K."/>
            <person name="Schatzley B.L."/>
            <person name="Schoenberger O.L."/>
            <person name="Tashiro M."/>
            <person name="Vichot G."/>
            <person name="Whatley H.E."/>
            <person name="Wieczorek A."/>
            <person name="Wieczorek M."/>
        </authorList>
    </citation>
    <scope>PROTEIN SEQUENCE</scope>
</reference>
<organism>
    <name type="scientific">Catreus wallichii</name>
    <name type="common">Cheer pheasant</name>
    <name type="synonym">Lophophorus wallichii</name>
    <dbReference type="NCBI Taxonomy" id="9085"/>
    <lineage>
        <taxon>Eukaryota</taxon>
        <taxon>Metazoa</taxon>
        <taxon>Chordata</taxon>
        <taxon>Craniata</taxon>
        <taxon>Vertebrata</taxon>
        <taxon>Euteleostomi</taxon>
        <taxon>Archelosauria</taxon>
        <taxon>Archosauria</taxon>
        <taxon>Dinosauria</taxon>
        <taxon>Saurischia</taxon>
        <taxon>Theropoda</taxon>
        <taxon>Coelurosauria</taxon>
        <taxon>Aves</taxon>
        <taxon>Neognathae</taxon>
        <taxon>Galloanserae</taxon>
        <taxon>Galliformes</taxon>
        <taxon>Phasianidae</taxon>
        <taxon>Phasianinae</taxon>
        <taxon>Catreus</taxon>
    </lineage>
</organism>
<comment type="subcellular location">
    <subcellularLocation>
        <location>Secreted</location>
    </subcellularLocation>
</comment>
<comment type="domain">
    <text>Avian ovomucoid consists of three homologous, tandem Kazal family inhibitory domains.</text>
</comment>
<protein>
    <recommendedName>
        <fullName>Ovomucoid</fullName>
    </recommendedName>
</protein>
<keyword id="KW-0903">Direct protein sequencing</keyword>
<keyword id="KW-1015">Disulfide bond</keyword>
<keyword id="KW-0325">Glycoprotein</keyword>
<keyword id="KW-0646">Protease inhibitor</keyword>
<keyword id="KW-0677">Repeat</keyword>
<keyword id="KW-0964">Secreted</keyword>
<keyword id="KW-0722">Serine protease inhibitor</keyword>